<keyword id="KW-0488">Methylation</keyword>
<keyword id="KW-1185">Reference proteome</keyword>
<keyword id="KW-0687">Ribonucleoprotein</keyword>
<keyword id="KW-0689">Ribosomal protein</keyword>
<keyword id="KW-0694">RNA-binding</keyword>
<keyword id="KW-0699">rRNA-binding</keyword>
<dbReference type="EMBL" id="CP001339">
    <property type="protein sequence ID" value="ACL73415.1"/>
    <property type="molecule type" value="Genomic_DNA"/>
</dbReference>
<dbReference type="RefSeq" id="WP_012638891.1">
    <property type="nucleotide sequence ID" value="NC_011901.1"/>
</dbReference>
<dbReference type="SMR" id="B8GV69"/>
<dbReference type="STRING" id="396588.Tgr7_2335"/>
<dbReference type="KEGG" id="tgr:Tgr7_2335"/>
<dbReference type="eggNOG" id="COG0080">
    <property type="taxonomic scope" value="Bacteria"/>
</dbReference>
<dbReference type="HOGENOM" id="CLU_074237_2_0_6"/>
<dbReference type="OrthoDB" id="9802408at2"/>
<dbReference type="Proteomes" id="UP000002383">
    <property type="component" value="Chromosome"/>
</dbReference>
<dbReference type="GO" id="GO:0022625">
    <property type="term" value="C:cytosolic large ribosomal subunit"/>
    <property type="evidence" value="ECO:0007669"/>
    <property type="project" value="TreeGrafter"/>
</dbReference>
<dbReference type="GO" id="GO:0070180">
    <property type="term" value="F:large ribosomal subunit rRNA binding"/>
    <property type="evidence" value="ECO:0007669"/>
    <property type="project" value="UniProtKB-UniRule"/>
</dbReference>
<dbReference type="GO" id="GO:0003735">
    <property type="term" value="F:structural constituent of ribosome"/>
    <property type="evidence" value="ECO:0007669"/>
    <property type="project" value="InterPro"/>
</dbReference>
<dbReference type="GO" id="GO:0006412">
    <property type="term" value="P:translation"/>
    <property type="evidence" value="ECO:0007669"/>
    <property type="project" value="UniProtKB-UniRule"/>
</dbReference>
<dbReference type="CDD" id="cd00349">
    <property type="entry name" value="Ribosomal_L11"/>
    <property type="match status" value="1"/>
</dbReference>
<dbReference type="FunFam" id="1.10.10.250:FF:000001">
    <property type="entry name" value="50S ribosomal protein L11"/>
    <property type="match status" value="1"/>
</dbReference>
<dbReference type="FunFam" id="3.30.1550.10:FF:000001">
    <property type="entry name" value="50S ribosomal protein L11"/>
    <property type="match status" value="1"/>
</dbReference>
<dbReference type="Gene3D" id="1.10.10.250">
    <property type="entry name" value="Ribosomal protein L11, C-terminal domain"/>
    <property type="match status" value="1"/>
</dbReference>
<dbReference type="Gene3D" id="3.30.1550.10">
    <property type="entry name" value="Ribosomal protein L11/L12, N-terminal domain"/>
    <property type="match status" value="1"/>
</dbReference>
<dbReference type="HAMAP" id="MF_00736">
    <property type="entry name" value="Ribosomal_uL11"/>
    <property type="match status" value="1"/>
</dbReference>
<dbReference type="InterPro" id="IPR000911">
    <property type="entry name" value="Ribosomal_uL11"/>
</dbReference>
<dbReference type="InterPro" id="IPR006519">
    <property type="entry name" value="Ribosomal_uL11_bac-typ"/>
</dbReference>
<dbReference type="InterPro" id="IPR020783">
    <property type="entry name" value="Ribosomal_uL11_C"/>
</dbReference>
<dbReference type="InterPro" id="IPR036769">
    <property type="entry name" value="Ribosomal_uL11_C_sf"/>
</dbReference>
<dbReference type="InterPro" id="IPR020785">
    <property type="entry name" value="Ribosomal_uL11_CS"/>
</dbReference>
<dbReference type="InterPro" id="IPR020784">
    <property type="entry name" value="Ribosomal_uL11_N"/>
</dbReference>
<dbReference type="InterPro" id="IPR036796">
    <property type="entry name" value="Ribosomal_uL11_N_sf"/>
</dbReference>
<dbReference type="NCBIfam" id="TIGR01632">
    <property type="entry name" value="L11_bact"/>
    <property type="match status" value="1"/>
</dbReference>
<dbReference type="PANTHER" id="PTHR11661">
    <property type="entry name" value="60S RIBOSOMAL PROTEIN L12"/>
    <property type="match status" value="1"/>
</dbReference>
<dbReference type="PANTHER" id="PTHR11661:SF1">
    <property type="entry name" value="LARGE RIBOSOMAL SUBUNIT PROTEIN UL11M"/>
    <property type="match status" value="1"/>
</dbReference>
<dbReference type="Pfam" id="PF00298">
    <property type="entry name" value="Ribosomal_L11"/>
    <property type="match status" value="1"/>
</dbReference>
<dbReference type="Pfam" id="PF03946">
    <property type="entry name" value="Ribosomal_L11_N"/>
    <property type="match status" value="1"/>
</dbReference>
<dbReference type="SMART" id="SM00649">
    <property type="entry name" value="RL11"/>
    <property type="match status" value="1"/>
</dbReference>
<dbReference type="SUPFAM" id="SSF54747">
    <property type="entry name" value="Ribosomal L11/L12e N-terminal domain"/>
    <property type="match status" value="1"/>
</dbReference>
<dbReference type="SUPFAM" id="SSF46906">
    <property type="entry name" value="Ribosomal protein L11, C-terminal domain"/>
    <property type="match status" value="1"/>
</dbReference>
<dbReference type="PROSITE" id="PS00359">
    <property type="entry name" value="RIBOSOMAL_L11"/>
    <property type="match status" value="1"/>
</dbReference>
<feature type="chain" id="PRO_1000195741" description="Large ribosomal subunit protein uL11">
    <location>
        <begin position="1"/>
        <end position="143"/>
    </location>
</feature>
<accession>B8GV69</accession>
<sequence>MAKKIDAYIKLQVKAGQANPSPPVGPALGQRGVNIMEFCKAFNAQTQGLEPGLPIPVVITVYSDRSFTFITKTPPASILLKKAAGITSGSATPNTNKVGKVTRAQLEEIAKTKMPDLTAADLDAAVRSIAGSARSMGLEVEGV</sequence>
<protein>
    <recommendedName>
        <fullName evidence="1">Large ribosomal subunit protein uL11</fullName>
    </recommendedName>
    <alternativeName>
        <fullName evidence="2">50S ribosomal protein L11</fullName>
    </alternativeName>
</protein>
<organism>
    <name type="scientific">Thioalkalivibrio sulfidiphilus (strain HL-EbGR7)</name>
    <dbReference type="NCBI Taxonomy" id="396588"/>
    <lineage>
        <taxon>Bacteria</taxon>
        <taxon>Pseudomonadati</taxon>
        <taxon>Pseudomonadota</taxon>
        <taxon>Gammaproteobacteria</taxon>
        <taxon>Chromatiales</taxon>
        <taxon>Ectothiorhodospiraceae</taxon>
        <taxon>Thioalkalivibrio</taxon>
    </lineage>
</organism>
<gene>
    <name evidence="1" type="primary">rplK</name>
    <name type="ordered locus">Tgr7_2335</name>
</gene>
<reference key="1">
    <citation type="journal article" date="2011" name="Stand. Genomic Sci.">
        <title>Complete genome sequence of 'Thioalkalivibrio sulfidophilus' HL-EbGr7.</title>
        <authorList>
            <person name="Muyzer G."/>
            <person name="Sorokin D.Y."/>
            <person name="Mavromatis K."/>
            <person name="Lapidus A."/>
            <person name="Clum A."/>
            <person name="Ivanova N."/>
            <person name="Pati A."/>
            <person name="d'Haeseleer P."/>
            <person name="Woyke T."/>
            <person name="Kyrpides N.C."/>
        </authorList>
    </citation>
    <scope>NUCLEOTIDE SEQUENCE [LARGE SCALE GENOMIC DNA]</scope>
    <source>
        <strain>HL-EbGR7</strain>
    </source>
</reference>
<proteinExistence type="inferred from homology"/>
<evidence type="ECO:0000255" key="1">
    <source>
        <dbReference type="HAMAP-Rule" id="MF_00736"/>
    </source>
</evidence>
<evidence type="ECO:0000305" key="2"/>
<comment type="function">
    <text evidence="1">Forms part of the ribosomal stalk which helps the ribosome interact with GTP-bound translation factors.</text>
</comment>
<comment type="subunit">
    <text evidence="1">Part of the ribosomal stalk of the 50S ribosomal subunit. Interacts with L10 and the large rRNA to form the base of the stalk. L10 forms an elongated spine to which L12 dimers bind in a sequential fashion forming a multimeric L10(L12)X complex.</text>
</comment>
<comment type="PTM">
    <text evidence="1">One or more lysine residues are methylated.</text>
</comment>
<comment type="similarity">
    <text evidence="1">Belongs to the universal ribosomal protein uL11 family.</text>
</comment>
<name>RL11_THISH</name>